<comment type="function">
    <text evidence="8">In higher plants aldehyde oxidases (AO) appear to be homo- and heterodimeric assemblies of AO subunits with probably different physiological functions. AO-alpha may be involved in the biosynthesis of auxin, and in biosynthesis of abscisic acid (ABA) in seeds. In vitro, AO-alpha uses heptaldehyde, protocatechualdehyde, benzaldehyde, indole-3-aldehyde (IAld), indole-3-acetaldehyde (IAAld), cinnamaldehyde and citral as substrates; AO-beta uses IAAld, IAld and naphtaldehyde as substrates.</text>
</comment>
<comment type="catalytic activity">
    <reaction evidence="4 5 8">
        <text>indole-3-acetaldehyde + O2 + H2O = (indol-3-yl)acetate + H2O2 + H(+)</text>
        <dbReference type="Rhea" id="RHEA:16277"/>
        <dbReference type="ChEBI" id="CHEBI:15377"/>
        <dbReference type="ChEBI" id="CHEBI:15378"/>
        <dbReference type="ChEBI" id="CHEBI:15379"/>
        <dbReference type="ChEBI" id="CHEBI:16240"/>
        <dbReference type="ChEBI" id="CHEBI:18086"/>
        <dbReference type="ChEBI" id="CHEBI:30854"/>
        <dbReference type="EC" id="1.2.3.7"/>
    </reaction>
</comment>
<comment type="cofactor">
    <cofactor evidence="1">
        <name>[2Fe-2S] cluster</name>
        <dbReference type="ChEBI" id="CHEBI:190135"/>
    </cofactor>
    <text evidence="1">Binds 2 [2Fe-2S] clusters.</text>
</comment>
<comment type="cofactor">
    <cofactor evidence="1">
        <name>FAD</name>
        <dbReference type="ChEBI" id="CHEBI:57692"/>
    </cofactor>
</comment>
<comment type="cofactor">
    <cofactor evidence="1">
        <name>Mo-molybdopterin</name>
        <dbReference type="ChEBI" id="CHEBI:71302"/>
    </cofactor>
    <text evidence="1">Binds 1 Mo-molybdopterin (Mo-MPT) cofactor per subunit.</text>
</comment>
<comment type="activity regulation">
    <text evidence="5">Strongly inhibited by iodoacetate and potassium cyanide (KCN). Weakly inhibited by 2-mercaptoethanol, dithiothreitol (DTT), menadione, estradiol, 4'-(9-acridinylamino)methanesulfon-m-anisidine (mAMSA), allopurinol and tritonX-100. Not affected by p-chloromercuribenzoate.</text>
</comment>
<comment type="biophysicochemical properties">
    <kinetics>
        <KM evidence="5">14 uM for heptaldehyde</KM>
        <KM evidence="5">19 uM for protocatechualdehyde</KM>
        <KM evidence="5">0.74 uM for benzaldehyde</KM>
        <KM evidence="5">4.4 uM for indole-3-aldehyde</KM>
        <KM evidence="5">39 uM for indole-3-acetaldehyde</KM>
        <KM evidence="5">20 uM for cinnamaldehyde</KM>
        <KM evidence="5">22 uM for citral</KM>
        <Vmax evidence="5">7.1 nmol/min/mg enzyme with heptaldehyde as substrate</Vmax>
        <Vmax evidence="5">8.0 nmol/min/mg enzyme with protocatechualdehyde as substrate</Vmax>
        <Vmax evidence="5">17.0 nmol/min/mg enzyme with benzaldehyde as substrate</Vmax>
        <Vmax evidence="5">6.9 nmol/min/mg enzyme with IAld as substrate</Vmax>
        <Vmax evidence="5">7.3 nmol/min/mg enzyme with IAAld as substrate</Vmax>
        <Vmax evidence="5">3.8 nmol/min/mg enzyme with cinnamaldehyde as substrate</Vmax>
        <Vmax evidence="5">38.0 nmol/min/mg enzyme with citral as substrate</Vmax>
        <text>Kinetic values were obtained with the AO-alpha dimer.</text>
    </kinetics>
    <phDependence>
        <text evidence="5">Optimum pH is 8.</text>
    </phDependence>
    <temperatureDependence>
        <text evidence="5">Optimum temperature is 65 degrees Celsius.</text>
    </temperatureDependence>
</comment>
<comment type="subunit">
    <text evidence="4">Aldehyde oxidases (AO) are homodimers and heterodimers of AO subunits. AO-alpha is an AAO1 homodimer; AO-beta is an AAO1-AAO2 heterodimer.</text>
</comment>
<comment type="subcellular location">
    <subcellularLocation>
        <location evidence="11">Cytoplasm</location>
    </subcellularLocation>
</comment>
<comment type="tissue specificity">
    <text evidence="6 7 8 9 10">Predominantly expressed in roots, seedlings, mature siliques and seeds, and to lower extent in stems and rosettes. In seedlings, mostly expressed in lower part of hypocotyls and roots.</text>
</comment>
<comment type="similarity">
    <text evidence="11">Belongs to the xanthine dehydrogenase family.</text>
</comment>
<protein>
    <recommendedName>
        <fullName>Indole-3-acetaldehyde oxidase</fullName>
        <shortName>IAA oxidase</shortName>
        <ecNumber>1.2.3.7</ecNumber>
    </recommendedName>
    <alternativeName>
        <fullName>Aldehyde oxidase 1</fullName>
        <shortName>AO-1</shortName>
        <shortName>AtAO-1</shortName>
        <shortName>AtAO1</shortName>
    </alternativeName>
</protein>
<proteinExistence type="evidence at protein level"/>
<feature type="chain" id="PRO_0000166109" description="Indole-3-acetaldehyde oxidase">
    <location>
        <begin position="1"/>
        <end position="1368"/>
    </location>
</feature>
<feature type="domain" description="2Fe-2S ferredoxin-type" evidence="2">
    <location>
        <begin position="19"/>
        <end position="108"/>
    </location>
</feature>
<feature type="domain" description="FAD-binding PCMH-type" evidence="3">
    <location>
        <begin position="246"/>
        <end position="427"/>
    </location>
</feature>
<feature type="binding site" evidence="2">
    <location>
        <position position="60"/>
    </location>
    <ligand>
        <name>[2Fe-2S] cluster</name>
        <dbReference type="ChEBI" id="CHEBI:190135"/>
    </ligand>
</feature>
<feature type="binding site" evidence="2">
    <location>
        <position position="65"/>
    </location>
    <ligand>
        <name>[2Fe-2S] cluster</name>
        <dbReference type="ChEBI" id="CHEBI:190135"/>
    </ligand>
</feature>
<feature type="binding site" evidence="2">
    <location>
        <position position="68"/>
    </location>
    <ligand>
        <name>[2Fe-2S] cluster</name>
        <dbReference type="ChEBI" id="CHEBI:190135"/>
    </ligand>
</feature>
<feature type="sequence conflict" description="In Ref. 1; AAC39509." evidence="11" ref="1">
    <original>S</original>
    <variation>G</variation>
    <location>
        <position position="16"/>
    </location>
</feature>
<feature type="sequence conflict" description="In Ref. 1; AAC39509." evidence="11" ref="1">
    <original>K</original>
    <variation>R</variation>
    <location>
        <position position="150"/>
    </location>
</feature>
<feature type="sequence conflict" description="In Ref. 1; AAC39509." evidence="11" ref="1">
    <original>NVSVLAKI</original>
    <variation>MFLCWRKY</variation>
    <location>
        <begin position="336"/>
        <end position="343"/>
    </location>
</feature>
<feature type="sequence conflict" description="In Ref. 1; AAC39509." evidence="11" ref="1">
    <original>E</original>
    <variation>K</variation>
    <location>
        <position position="624"/>
    </location>
</feature>
<feature type="sequence conflict" description="In Ref. 1; AAC39509." evidence="11" ref="1">
    <original>I</original>
    <variation>V</variation>
    <location>
        <position position="708"/>
    </location>
</feature>
<feature type="sequence conflict" description="In Ref. 1; AAC39509." evidence="11" ref="1">
    <original>W</original>
    <variation>L</variation>
    <location>
        <position position="1260"/>
    </location>
</feature>
<evidence type="ECO:0000250" key="1"/>
<evidence type="ECO:0000255" key="2">
    <source>
        <dbReference type="PROSITE-ProRule" id="PRU00465"/>
    </source>
</evidence>
<evidence type="ECO:0000255" key="3">
    <source>
        <dbReference type="PROSITE-ProRule" id="PRU00718"/>
    </source>
</evidence>
<evidence type="ECO:0000269" key="4">
    <source>
    </source>
</evidence>
<evidence type="ECO:0000269" key="5">
    <source>
    </source>
</evidence>
<evidence type="ECO:0000269" key="6">
    <source>
    </source>
</evidence>
<evidence type="ECO:0000269" key="7">
    <source>
    </source>
</evidence>
<evidence type="ECO:0000269" key="8">
    <source>
    </source>
</evidence>
<evidence type="ECO:0000269" key="9">
    <source>
    </source>
</evidence>
<evidence type="ECO:0000269" key="10">
    <source>
    </source>
</evidence>
<evidence type="ECO:0000305" key="11"/>
<organism>
    <name type="scientific">Arabidopsis thaliana</name>
    <name type="common">Mouse-ear cress</name>
    <dbReference type="NCBI Taxonomy" id="3702"/>
    <lineage>
        <taxon>Eukaryota</taxon>
        <taxon>Viridiplantae</taxon>
        <taxon>Streptophyta</taxon>
        <taxon>Embryophyta</taxon>
        <taxon>Tracheophyta</taxon>
        <taxon>Spermatophyta</taxon>
        <taxon>Magnoliopsida</taxon>
        <taxon>eudicotyledons</taxon>
        <taxon>Gunneridae</taxon>
        <taxon>Pentapetalae</taxon>
        <taxon>rosids</taxon>
        <taxon>malvids</taxon>
        <taxon>Brassicales</taxon>
        <taxon>Brassicaceae</taxon>
        <taxon>Camelineae</taxon>
        <taxon>Arabidopsis</taxon>
    </lineage>
</organism>
<keyword id="KW-0001">2Fe-2S</keyword>
<keyword id="KW-0937">Abscisic acid biosynthesis</keyword>
<keyword id="KW-0073">Auxin biosynthesis</keyword>
<keyword id="KW-0963">Cytoplasm</keyword>
<keyword id="KW-0274">FAD</keyword>
<keyword id="KW-0285">Flavoprotein</keyword>
<keyword id="KW-0408">Iron</keyword>
<keyword id="KW-0411">Iron-sulfur</keyword>
<keyword id="KW-0479">Metal-binding</keyword>
<keyword id="KW-0500">Molybdenum</keyword>
<keyword id="KW-0520">NAD</keyword>
<keyword id="KW-0560">Oxidoreductase</keyword>
<keyword id="KW-1185">Reference proteome</keyword>
<sequence>MGEKAIDEDKVEAMKSSKTSLVFAINGQRFELELSSIDPSTTLVDFLRNKTPFKSVKLGCGEGGCGACVVLLSKYDPLLEKVDEFTISSCLTLLCSIDGCSITTSDGLGNSRVGFHAVHERIAGFHATQCGFCTPGMSVSMFSALLNADKSHPPPRSGFSNLTAVEAEKAVSGNLCRCTGYRPLVDACKSFAADVDIEDLGFNAFCKKGENRDEVLRRLPCYDHTSSHVCTFPEFLKKEIKNDMSLHSRKYRWSSPVSVSELQGLLEVENGLSVKLVAGNTSTGYYKEEKERKYERFIDIRKIPEFTMVRSDEKGVELGACVTISKAIEVLREEKNVSVLAKIATHMEKIANRFVRNTGTIGGNIMMAQRKQFPSDLATILVAAQATVKIMTSSSSQEQFTLEEFLQQPPLDAKSLLLSLEIPSWHSAKKNGSSEDSILLFETYRAAPRPLGNALAFLNAAFSAEVTEALDGIVVNDCQLVFGAYGTKHAHRAKKVEEFLTGKVISDEVLMEAISLLKDEIVPDKGTSNPGYRSSLAVTFLFEFFGSLTKKNAKTTNGWLNGGCKEIGFDQNVESLKPEAMLSSAQQIVENQEHSPVGKGITKAGACLQASGEAVYVDDIPAPENCLYGAFIYSTMPLARIKGIRFKQNRVPEGVLGIITYKDIPKGGQNIGTNGFFTSDLLFAEEVTHCAGQIIAFLVADSQKHADIAANLVVIDYDTKDLKPPILSLEEAVENFSLFEVPPPLRGYPVGDITKGMDEAEHKILGSKISFGSQYFFYMETQTALAVPDEDNCMVVYSSTQTPEFVHQTIAGCLGVPENNVRVITRRVGGGFGGKAVKSMPVAAACALAASKMQRPVRTYVNRKTDMITTGGRHPMKVTYSVGFKSNGKITALDVEVLLDAGLTEDISPLMPKGIQGALMKYDWGALSFNVKVCKTNTVSRTALRAPGDVQGSYIGEAIIEKVASYLSVDVDEIRKVNLHTYESLRLFHSAKAGEFSEYTLPLLWDRIDEFSGFNKRRKVVEEFNASNKWRKRGISRVPAVYAVNMRSTPGRVSVLGDGSIVVEVQGIEIGQGLWTKVKQMAAYSLGLIQCGTTSDELLKKIRVIQSDTLSMVQGSMTAGSTTSEASSEAVRICCDGLVERLLPVKTALVEQTGGPVTWDSLISQAYQQSINMSVSSKYMPDSTGEYLNYGIAASEVEVNVLTGETTILRTDIIYDCGKSLNPAVDLGQIEGAFVQGLGFFMLEEFLMNSDGLVVTDSTWTYKIPTVDTIPRQFNVEILNSGQHKNRVLSSKASGEPPLLLAASVHCAVRAAVKEARKQILSWNSNKQGTDMYFELPVPATMPIVKEFCGLDVVEKYLEWKIQQRKNV</sequence>
<gene>
    <name type="primary">AAO1</name>
    <name type="synonym">AO1</name>
    <name type="ordered locus">At5g20960</name>
    <name type="ORF">F22D1.130</name>
</gene>
<accession>Q7G193</accession>
<accession>O49155</accession>
<accession>O64417</accession>
<reference key="1">
    <citation type="journal article" date="1998" name="Biochim. Biophys. Acta">
        <title>Biochemical and genetic characterization of three molybdenum cofactor hydroxylases in Arabidopsis thaliana.</title>
        <authorList>
            <person name="Hoff T."/>
            <person name="Frandsen G.I."/>
            <person name="Rocher A."/>
            <person name="Mundy J."/>
        </authorList>
    </citation>
    <scope>NUCLEOTIDE SEQUENCE [MRNA]</scope>
    <scope>TISSUE SPECIFICITY</scope>
    <source>
        <strain>cv. Columbia</strain>
        <tissue>Root</tissue>
    </source>
</reference>
<reference key="2">
    <citation type="journal article" date="1998" name="Plant Cell Physiol.">
        <title>Molecular cloning and characterization of aldehyde oxidases in Arabidopsis thaliana.</title>
        <authorList>
            <person name="Sekimoto H."/>
            <person name="Seo M."/>
            <person name="Kawakami N."/>
            <person name="Komano T."/>
            <person name="Desloire S."/>
            <person name="Liotenberg S."/>
            <person name="Marion-Poll A."/>
            <person name="Caboche M."/>
            <person name="Kamiya Y."/>
            <person name="Koshiba T."/>
        </authorList>
    </citation>
    <scope>NUCLEOTIDE SEQUENCE [MRNA]</scope>
    <scope>TISSUE SPECIFICITY</scope>
    <source>
        <strain>cv. Columbia</strain>
        <tissue>Seedling hypocotyl</tissue>
    </source>
</reference>
<reference key="3">
    <citation type="journal article" date="2000" name="Nature">
        <title>Sequence and analysis of chromosome 5 of the plant Arabidopsis thaliana.</title>
        <authorList>
            <person name="Tabata S."/>
            <person name="Kaneko T."/>
            <person name="Nakamura Y."/>
            <person name="Kotani H."/>
            <person name="Kato T."/>
            <person name="Asamizu E."/>
            <person name="Miyajima N."/>
            <person name="Sasamoto S."/>
            <person name="Kimura T."/>
            <person name="Hosouchi T."/>
            <person name="Kawashima K."/>
            <person name="Kohara M."/>
            <person name="Matsumoto M."/>
            <person name="Matsuno A."/>
            <person name="Muraki A."/>
            <person name="Nakayama S."/>
            <person name="Nakazaki N."/>
            <person name="Naruo K."/>
            <person name="Okumura S."/>
            <person name="Shinpo S."/>
            <person name="Takeuchi C."/>
            <person name="Wada T."/>
            <person name="Watanabe A."/>
            <person name="Yamada M."/>
            <person name="Yasuda M."/>
            <person name="Sato S."/>
            <person name="de la Bastide M."/>
            <person name="Huang E."/>
            <person name="Spiegel L."/>
            <person name="Gnoj L."/>
            <person name="O'Shaughnessy A."/>
            <person name="Preston R."/>
            <person name="Habermann K."/>
            <person name="Murray J."/>
            <person name="Johnson D."/>
            <person name="Rohlfing T."/>
            <person name="Nelson J."/>
            <person name="Stoneking T."/>
            <person name="Pepin K."/>
            <person name="Spieth J."/>
            <person name="Sekhon M."/>
            <person name="Armstrong J."/>
            <person name="Becker M."/>
            <person name="Belter E."/>
            <person name="Cordum H."/>
            <person name="Cordes M."/>
            <person name="Courtney L."/>
            <person name="Courtney W."/>
            <person name="Dante M."/>
            <person name="Du H."/>
            <person name="Edwards J."/>
            <person name="Fryman J."/>
            <person name="Haakensen B."/>
            <person name="Lamar E."/>
            <person name="Latreille P."/>
            <person name="Leonard S."/>
            <person name="Meyer R."/>
            <person name="Mulvaney E."/>
            <person name="Ozersky P."/>
            <person name="Riley A."/>
            <person name="Strowmatt C."/>
            <person name="Wagner-McPherson C."/>
            <person name="Wollam A."/>
            <person name="Yoakum M."/>
            <person name="Bell M."/>
            <person name="Dedhia N."/>
            <person name="Parnell L."/>
            <person name="Shah R."/>
            <person name="Rodriguez M."/>
            <person name="Hoon See L."/>
            <person name="Vil D."/>
            <person name="Baker J."/>
            <person name="Kirchoff K."/>
            <person name="Toth K."/>
            <person name="King L."/>
            <person name="Bahret A."/>
            <person name="Miller B."/>
            <person name="Marra M.A."/>
            <person name="Martienssen R."/>
            <person name="McCombie W.R."/>
            <person name="Wilson R.K."/>
            <person name="Murphy G."/>
            <person name="Bancroft I."/>
            <person name="Volckaert G."/>
            <person name="Wambutt R."/>
            <person name="Duesterhoeft A."/>
            <person name="Stiekema W."/>
            <person name="Pohl T."/>
            <person name="Entian K.-D."/>
            <person name="Terryn N."/>
            <person name="Hartley N."/>
            <person name="Bent E."/>
            <person name="Johnson S."/>
            <person name="Langham S.-A."/>
            <person name="McCullagh B."/>
            <person name="Robben J."/>
            <person name="Grymonprez B."/>
            <person name="Zimmermann W."/>
            <person name="Ramsperger U."/>
            <person name="Wedler H."/>
            <person name="Balke K."/>
            <person name="Wedler E."/>
            <person name="Peters S."/>
            <person name="van Staveren M."/>
            <person name="Dirkse W."/>
            <person name="Mooijman P."/>
            <person name="Klein Lankhorst R."/>
            <person name="Weitzenegger T."/>
            <person name="Bothe G."/>
            <person name="Rose M."/>
            <person name="Hauf J."/>
            <person name="Berneiser S."/>
            <person name="Hempel S."/>
            <person name="Feldpausch M."/>
            <person name="Lamberth S."/>
            <person name="Villarroel R."/>
            <person name="Gielen J."/>
            <person name="Ardiles W."/>
            <person name="Bents O."/>
            <person name="Lemcke K."/>
            <person name="Kolesov G."/>
            <person name="Mayer K.F.X."/>
            <person name="Rudd S."/>
            <person name="Schoof H."/>
            <person name="Schueller C."/>
            <person name="Zaccaria P."/>
            <person name="Mewes H.-W."/>
            <person name="Bevan M."/>
            <person name="Fransz P.F."/>
        </authorList>
    </citation>
    <scope>NUCLEOTIDE SEQUENCE [LARGE SCALE GENOMIC DNA]</scope>
    <source>
        <strain>cv. Columbia</strain>
    </source>
</reference>
<reference key="4">
    <citation type="journal article" date="2017" name="Plant J.">
        <title>Araport11: a complete reannotation of the Arabidopsis thaliana reference genome.</title>
        <authorList>
            <person name="Cheng C.Y."/>
            <person name="Krishnakumar V."/>
            <person name="Chan A.P."/>
            <person name="Thibaud-Nissen F."/>
            <person name="Schobel S."/>
            <person name="Town C.D."/>
        </authorList>
    </citation>
    <scope>GENOME REANNOTATION</scope>
    <source>
        <strain>cv. Columbia</strain>
    </source>
</reference>
<reference key="5">
    <citation type="journal article" date="1998" name="Plant Physiol.">
        <title>Higher activity of an aldehyde oxidase in the auxin-overproducing superroot1 mutant of Arabidopsis thaliana.</title>
        <authorList>
            <person name="Seo M."/>
            <person name="Akaba S."/>
            <person name="Oritani T."/>
            <person name="Delarue M."/>
            <person name="Bellini C."/>
            <person name="Caboche M."/>
            <person name="Koshiba T."/>
        </authorList>
    </citation>
    <scope>FUNCTION</scope>
    <scope>TISSUE SPECIFICITY</scope>
    <scope>SUBSTRATE SPECIFICITY</scope>
    <scope>CATALYTIC ACTIVITY</scope>
    <source>
        <strain>cv. Columbia</strain>
    </source>
</reference>
<reference key="6">
    <citation type="journal article" date="1999" name="J. Biochem.">
        <title>Production of homo- and hetero-dimeric isozymes from two aldehyde oxidase genes of Arabidopsis thaliana.</title>
        <authorList>
            <person name="Akaba S."/>
            <person name="Seo M."/>
            <person name="Dohmae N."/>
            <person name="Takio K."/>
            <person name="Sekimoto H."/>
            <person name="Kamiya Y."/>
            <person name="Furuya N."/>
            <person name="Komano T."/>
            <person name="Koshiba T."/>
        </authorList>
    </citation>
    <scope>SUBUNIT</scope>
    <scope>CATALYTIC ACTIVITY</scope>
    <scope>IDENTIFICATION BY MASS SPECTROMETRY</scope>
</reference>
<reference key="7">
    <citation type="journal article" date="2000" name="J. Biochem.">
        <title>Functional expression of two Arabidopsis aldehyde oxidases in the yeast Pichia pastoris.</title>
        <authorList>
            <person name="Koiwai H."/>
            <person name="Akaba S."/>
            <person name="Seo M."/>
            <person name="Komano T."/>
            <person name="Koshiba T."/>
        </authorList>
    </citation>
    <scope>BIOPHYSICOCHEMICAL PROPERTIES</scope>
    <scope>ACTIVITY REGULATION</scope>
    <scope>CATALYTIC ACTIVITY</scope>
</reference>
<reference key="8">
    <citation type="journal article" date="2000" name="Plant J.">
        <title>Abscisic aldehyde oxidase in leaves of Arabidopsis thaliana.</title>
        <authorList>
            <person name="Seo M."/>
            <person name="Koiwai H."/>
            <person name="Akaba S."/>
            <person name="Komano T."/>
            <person name="Oritani T."/>
            <person name="Kamiya Y."/>
            <person name="Koshiba T."/>
        </authorList>
    </citation>
    <scope>TISSUE SPECIFICITY</scope>
</reference>
<reference key="9">
    <citation type="journal article" date="2004" name="Plant Cell Physiol.">
        <title>Comparative studies on the Arabidopsis aldehyde oxidase (AAO) gene family revealed a major role of AAO3 in ABA biosynthesis in seeds.</title>
        <authorList>
            <person name="Seo M."/>
            <person name="Aoki H."/>
            <person name="Koiwai H."/>
            <person name="Kamiya Y."/>
            <person name="Nambara E."/>
            <person name="Koshiba T."/>
        </authorList>
    </citation>
    <scope>TISSUE SPECIFICITY</scope>
</reference>
<dbReference type="EC" id="1.2.3.7"/>
<dbReference type="EMBL" id="AF039895">
    <property type="protein sequence ID" value="AAC39509.1"/>
    <property type="molecule type" value="mRNA"/>
</dbReference>
<dbReference type="EMBL" id="AB005804">
    <property type="protein sequence ID" value="BAA28624.1"/>
    <property type="molecule type" value="mRNA"/>
</dbReference>
<dbReference type="EMBL" id="AF296834">
    <property type="status" value="NOT_ANNOTATED_CDS"/>
    <property type="molecule type" value="Genomic_DNA"/>
</dbReference>
<dbReference type="EMBL" id="CP002688">
    <property type="protein sequence ID" value="AED92912.1"/>
    <property type="molecule type" value="Genomic_DNA"/>
</dbReference>
<dbReference type="EMBL" id="CP002688">
    <property type="protein sequence ID" value="AED92913.1"/>
    <property type="molecule type" value="Genomic_DNA"/>
</dbReference>
<dbReference type="PIR" id="T51622">
    <property type="entry name" value="T51622"/>
</dbReference>
<dbReference type="PIR" id="T52049">
    <property type="entry name" value="T52049"/>
</dbReference>
<dbReference type="RefSeq" id="NP_568407.2">
    <property type="nucleotide sequence ID" value="NM_122105.3"/>
</dbReference>
<dbReference type="RefSeq" id="NP_851049.1">
    <property type="nucleotide sequence ID" value="NM_180718.2"/>
</dbReference>
<dbReference type="SMR" id="Q7G193"/>
<dbReference type="BioGRID" id="17496">
    <property type="interactions" value="1"/>
</dbReference>
<dbReference type="FunCoup" id="Q7G193">
    <property type="interactions" value="77"/>
</dbReference>
<dbReference type="IntAct" id="Q7G193">
    <property type="interactions" value="1"/>
</dbReference>
<dbReference type="STRING" id="3702.Q7G193"/>
<dbReference type="iPTMnet" id="Q7G193"/>
<dbReference type="PaxDb" id="3702-AT5G20960.1"/>
<dbReference type="ProteomicsDB" id="244869"/>
<dbReference type="EnsemblPlants" id="AT5G20960.1">
    <property type="protein sequence ID" value="AT5G20960.1"/>
    <property type="gene ID" value="AT5G20960"/>
</dbReference>
<dbReference type="EnsemblPlants" id="AT5G20960.2">
    <property type="protein sequence ID" value="AT5G20960.2"/>
    <property type="gene ID" value="AT5G20960"/>
</dbReference>
<dbReference type="GeneID" id="832221"/>
<dbReference type="Gramene" id="AT5G20960.1">
    <property type="protein sequence ID" value="AT5G20960.1"/>
    <property type="gene ID" value="AT5G20960"/>
</dbReference>
<dbReference type="Gramene" id="AT5G20960.2">
    <property type="protein sequence ID" value="AT5G20960.2"/>
    <property type="gene ID" value="AT5G20960"/>
</dbReference>
<dbReference type="KEGG" id="ath:AT5G20960"/>
<dbReference type="Araport" id="AT5G20960"/>
<dbReference type="TAIR" id="AT5G20960">
    <property type="gene designation" value="AO1"/>
</dbReference>
<dbReference type="eggNOG" id="KOG0430">
    <property type="taxonomic scope" value="Eukaryota"/>
</dbReference>
<dbReference type="HOGENOM" id="CLU_001681_1_2_1"/>
<dbReference type="InParanoid" id="Q7G193"/>
<dbReference type="OMA" id="LTATNCY"/>
<dbReference type="PhylomeDB" id="Q7G193"/>
<dbReference type="BioCyc" id="ARA:AT5G20960-MONOMER"/>
<dbReference type="BioCyc" id="MetaCyc:AT5G20960-MONOMER"/>
<dbReference type="BRENDA" id="1.2.3.1">
    <property type="organism ID" value="399"/>
</dbReference>
<dbReference type="BRENDA" id="1.2.3.7">
    <property type="organism ID" value="399"/>
</dbReference>
<dbReference type="SABIO-RK" id="Q7G193"/>
<dbReference type="PRO" id="PR:Q7G193"/>
<dbReference type="Proteomes" id="UP000006548">
    <property type="component" value="Chromosome 5"/>
</dbReference>
<dbReference type="ExpressionAtlas" id="Q7G193">
    <property type="expression patterns" value="baseline and differential"/>
</dbReference>
<dbReference type="GO" id="GO:0009536">
    <property type="term" value="C:plastid"/>
    <property type="evidence" value="ECO:0007005"/>
    <property type="project" value="TAIR"/>
</dbReference>
<dbReference type="GO" id="GO:0051537">
    <property type="term" value="F:2 iron, 2 sulfur cluster binding"/>
    <property type="evidence" value="ECO:0007669"/>
    <property type="project" value="UniProtKB-KW"/>
</dbReference>
<dbReference type="GO" id="GO:0004031">
    <property type="term" value="F:aldehyde oxidase activity"/>
    <property type="evidence" value="ECO:0000314"/>
    <property type="project" value="TAIR"/>
</dbReference>
<dbReference type="GO" id="GO:0071949">
    <property type="term" value="F:FAD binding"/>
    <property type="evidence" value="ECO:0007669"/>
    <property type="project" value="InterPro"/>
</dbReference>
<dbReference type="GO" id="GO:0050302">
    <property type="term" value="F:indole-3-acetaldehyde oxidase activity"/>
    <property type="evidence" value="ECO:0000314"/>
    <property type="project" value="TAIR"/>
</dbReference>
<dbReference type="GO" id="GO:0005506">
    <property type="term" value="F:iron ion binding"/>
    <property type="evidence" value="ECO:0007669"/>
    <property type="project" value="InterPro"/>
</dbReference>
<dbReference type="GO" id="GO:0009688">
    <property type="term" value="P:abscisic acid biosynthetic process"/>
    <property type="evidence" value="ECO:0007669"/>
    <property type="project" value="UniProtKB-KW"/>
</dbReference>
<dbReference type="GO" id="GO:0009851">
    <property type="term" value="P:auxin biosynthetic process"/>
    <property type="evidence" value="ECO:0000315"/>
    <property type="project" value="TAIR"/>
</dbReference>
<dbReference type="FunFam" id="1.10.150.120:FF:000006">
    <property type="entry name" value="Aldehyde oxidase"/>
    <property type="match status" value="1"/>
</dbReference>
<dbReference type="FunFam" id="3.30.465.10:FF:000013">
    <property type="entry name" value="Aldehyde oxidase"/>
    <property type="match status" value="1"/>
</dbReference>
<dbReference type="FunFam" id="3.30.390.50:FF:000003">
    <property type="entry name" value="Aldehyde oxidase1"/>
    <property type="match status" value="1"/>
</dbReference>
<dbReference type="FunFam" id="3.30.43.10:FF:000023">
    <property type="entry name" value="Indole-3-acetaldehyde oxidase"/>
    <property type="match status" value="1"/>
</dbReference>
<dbReference type="FunFam" id="3.30.365.10:FF:000001">
    <property type="entry name" value="Xanthine dehydrogenase oxidase"/>
    <property type="match status" value="1"/>
</dbReference>
<dbReference type="FunFam" id="3.10.20.30:FF:000012">
    <property type="entry name" value="Xanthine dehydrogenase/oxidase"/>
    <property type="match status" value="1"/>
</dbReference>
<dbReference type="Gene3D" id="3.10.20.30">
    <property type="match status" value="1"/>
</dbReference>
<dbReference type="Gene3D" id="3.30.465.10">
    <property type="match status" value="1"/>
</dbReference>
<dbReference type="Gene3D" id="1.10.150.120">
    <property type="entry name" value="[2Fe-2S]-binding domain"/>
    <property type="match status" value="1"/>
</dbReference>
<dbReference type="Gene3D" id="3.90.1170.50">
    <property type="entry name" value="Aldehyde oxidase/xanthine dehydrogenase, a/b hammerhead"/>
    <property type="match status" value="1"/>
</dbReference>
<dbReference type="Gene3D" id="3.30.365.10">
    <property type="entry name" value="Aldehyde oxidase/xanthine dehydrogenase, molybdopterin binding domain"/>
    <property type="match status" value="4"/>
</dbReference>
<dbReference type="Gene3D" id="3.30.390.50">
    <property type="entry name" value="CO dehydrogenase flavoprotein, C-terminal domain"/>
    <property type="match status" value="1"/>
</dbReference>
<dbReference type="Gene3D" id="3.30.43.10">
    <property type="entry name" value="Uridine Diphospho-n-acetylenolpyruvylglucosamine Reductase, domain 2"/>
    <property type="match status" value="1"/>
</dbReference>
<dbReference type="InterPro" id="IPR002888">
    <property type="entry name" value="2Fe-2S-bd"/>
</dbReference>
<dbReference type="InterPro" id="IPR036884">
    <property type="entry name" value="2Fe-2S-bd_dom_sf"/>
</dbReference>
<dbReference type="InterPro" id="IPR036010">
    <property type="entry name" value="2Fe-2S_ferredoxin-like_sf"/>
</dbReference>
<dbReference type="InterPro" id="IPR001041">
    <property type="entry name" value="2Fe-2S_ferredoxin-type"/>
</dbReference>
<dbReference type="InterPro" id="IPR006058">
    <property type="entry name" value="2Fe2S_fd_BS"/>
</dbReference>
<dbReference type="InterPro" id="IPR000674">
    <property type="entry name" value="Ald_Oxase/Xan_DH_a/b"/>
</dbReference>
<dbReference type="InterPro" id="IPR036856">
    <property type="entry name" value="Ald_Oxase/Xan_DH_a/b_sf"/>
</dbReference>
<dbReference type="InterPro" id="IPR016208">
    <property type="entry name" value="Ald_Oxase/xanthine_DH-like"/>
</dbReference>
<dbReference type="InterPro" id="IPR008274">
    <property type="entry name" value="AldOxase/xan_DH_MoCoBD1"/>
</dbReference>
<dbReference type="InterPro" id="IPR046867">
    <property type="entry name" value="AldOxase/xan_DH_MoCoBD2"/>
</dbReference>
<dbReference type="InterPro" id="IPR037165">
    <property type="entry name" value="AldOxase/xan_DH_Mopterin-bd_sf"/>
</dbReference>
<dbReference type="InterPro" id="IPR012675">
    <property type="entry name" value="Beta-grasp_dom_sf"/>
</dbReference>
<dbReference type="InterPro" id="IPR005107">
    <property type="entry name" value="CO_DH_flav_C"/>
</dbReference>
<dbReference type="InterPro" id="IPR036683">
    <property type="entry name" value="CO_DH_flav_C_dom_sf"/>
</dbReference>
<dbReference type="InterPro" id="IPR016166">
    <property type="entry name" value="FAD-bd_PCMH"/>
</dbReference>
<dbReference type="InterPro" id="IPR036318">
    <property type="entry name" value="FAD-bd_PCMH-like_sf"/>
</dbReference>
<dbReference type="InterPro" id="IPR016167">
    <property type="entry name" value="FAD-bd_PCMH_sub1"/>
</dbReference>
<dbReference type="InterPro" id="IPR016169">
    <property type="entry name" value="FAD-bd_PCMH_sub2"/>
</dbReference>
<dbReference type="InterPro" id="IPR002346">
    <property type="entry name" value="Mopterin_DH_FAD-bd"/>
</dbReference>
<dbReference type="PANTHER" id="PTHR11908:SF135">
    <property type="entry name" value="INDOLE-3-ACETALDEHYDE OXIDASE"/>
    <property type="match status" value="1"/>
</dbReference>
<dbReference type="PANTHER" id="PTHR11908">
    <property type="entry name" value="XANTHINE DEHYDROGENASE"/>
    <property type="match status" value="1"/>
</dbReference>
<dbReference type="Pfam" id="PF01315">
    <property type="entry name" value="Ald_Xan_dh_C"/>
    <property type="match status" value="1"/>
</dbReference>
<dbReference type="Pfam" id="PF03450">
    <property type="entry name" value="CO_deh_flav_C"/>
    <property type="match status" value="1"/>
</dbReference>
<dbReference type="Pfam" id="PF00941">
    <property type="entry name" value="FAD_binding_5"/>
    <property type="match status" value="1"/>
</dbReference>
<dbReference type="Pfam" id="PF00111">
    <property type="entry name" value="Fer2"/>
    <property type="match status" value="1"/>
</dbReference>
<dbReference type="Pfam" id="PF01799">
    <property type="entry name" value="Fer2_2"/>
    <property type="match status" value="1"/>
</dbReference>
<dbReference type="Pfam" id="PF02738">
    <property type="entry name" value="MoCoBD_1"/>
    <property type="match status" value="1"/>
</dbReference>
<dbReference type="Pfam" id="PF20256">
    <property type="entry name" value="MoCoBD_2"/>
    <property type="match status" value="1"/>
</dbReference>
<dbReference type="PIRSF" id="PIRSF000127">
    <property type="entry name" value="Xanthine_DH"/>
    <property type="match status" value="1"/>
</dbReference>
<dbReference type="SMART" id="SM01008">
    <property type="entry name" value="Ald_Xan_dh_C"/>
    <property type="match status" value="1"/>
</dbReference>
<dbReference type="SMART" id="SM01092">
    <property type="entry name" value="CO_deh_flav_C"/>
    <property type="match status" value="1"/>
</dbReference>
<dbReference type="SUPFAM" id="SSF54292">
    <property type="entry name" value="2Fe-2S ferredoxin-like"/>
    <property type="match status" value="1"/>
</dbReference>
<dbReference type="SUPFAM" id="SSF55447">
    <property type="entry name" value="CO dehydrogenase flavoprotein C-terminal domain-like"/>
    <property type="match status" value="1"/>
</dbReference>
<dbReference type="SUPFAM" id="SSF47741">
    <property type="entry name" value="CO dehydrogenase ISP C-domain like"/>
    <property type="match status" value="1"/>
</dbReference>
<dbReference type="SUPFAM" id="SSF54665">
    <property type="entry name" value="CO dehydrogenase molybdoprotein N-domain-like"/>
    <property type="match status" value="1"/>
</dbReference>
<dbReference type="SUPFAM" id="SSF56176">
    <property type="entry name" value="FAD-binding/transporter-associated domain-like"/>
    <property type="match status" value="1"/>
</dbReference>
<dbReference type="SUPFAM" id="SSF56003">
    <property type="entry name" value="Molybdenum cofactor-binding domain"/>
    <property type="match status" value="1"/>
</dbReference>
<dbReference type="PROSITE" id="PS00197">
    <property type="entry name" value="2FE2S_FER_1"/>
    <property type="match status" value="1"/>
</dbReference>
<dbReference type="PROSITE" id="PS51085">
    <property type="entry name" value="2FE2S_FER_2"/>
    <property type="match status" value="1"/>
</dbReference>
<dbReference type="PROSITE" id="PS51387">
    <property type="entry name" value="FAD_PCMH"/>
    <property type="match status" value="1"/>
</dbReference>
<name>ALDO1_ARATH</name>